<proteinExistence type="inferred from homology"/>
<comment type="function">
    <text evidence="1">Usually encoded in the trnK tRNA gene intron. Probably assists in splicing its own and other chloroplast group II introns.</text>
</comment>
<comment type="subcellular location">
    <subcellularLocation>
        <location>Plastid</location>
        <location>Chloroplast</location>
    </subcellularLocation>
</comment>
<comment type="similarity">
    <text evidence="1">Belongs to the intron maturase 2 family. MatK subfamily.</text>
</comment>
<reference key="1">
    <citation type="journal article" date="1999" name="Syst. Bot.">
        <title>Phylogeny, classification and floral evolution of water lilies (Nymphaeaceae; Nymphaeales): a synthesis of non-molecular, rbcL, matK and 18S rDNA data.</title>
        <authorList>
            <person name="Les D.H."/>
            <person name="Schneider E.L."/>
            <person name="Padgett D.J."/>
            <person name="Soltis P.S."/>
            <person name="Soltis D.E."/>
            <person name="Zanis M."/>
        </authorList>
        <dbReference type="AGRICOLA" id="IND22004848"/>
    </citation>
    <scope>NUCLEOTIDE SEQUENCE [GENOMIC DNA]</scope>
</reference>
<geneLocation type="chloroplast"/>
<accession>O98635</accession>
<sequence length="505" mass="59644">MEKLQYELQGYLEIDRYRKQRFLYPLLFREYIYALAHDHGLNSSIFMKPTENLGYDNDNKSSSLIVKRLITRLHQQNHLIISVNDSRFVGPNRSFYSQTISEGFAGIMEIPFSMRLVPSLERIAKYQNLRSIHSIFPFLEDKLSHLYYVSDILIPHPIHLEILLQTLRTRIRDAPSLHLLRCFLHEHHNWNSLITPKKSTSIFSKENQRLFLFLYNSHVYECESVLVFLRKQSSHLRSISSLAFLERTHFYGKIKHLVVAPRNDSQRTLPLWFFKEPLMHYVRYQGKSIMASRCTNLLMKKWKYYLVNFWQCHFHLWSQPGGIHINELSNHSFYFLGYLSGVRLMPWVIRSQMLENSFMIDTAIKRFDTIVPIFPLIGSLVKAKFCNVSGYPISKSVWADSSDSDIIARFGWICRNLSHYHSGSSKKHSLCRIKYILRLSCARTLARKHKSTVRVICKRLGSKLLEEFLTEEQEIVSFIFRGTRLRSERIWYLDIIRINGLVPHS</sequence>
<organism>
    <name type="scientific">Nuphar variegata</name>
    <name type="common">Yellow pond lily</name>
    <name type="synonym">Nuphar lutea subsp. variegata</name>
    <dbReference type="NCBI Taxonomy" id="4416"/>
    <lineage>
        <taxon>Eukaryota</taxon>
        <taxon>Viridiplantae</taxon>
        <taxon>Streptophyta</taxon>
        <taxon>Embryophyta</taxon>
        <taxon>Tracheophyta</taxon>
        <taxon>Spermatophyta</taxon>
        <taxon>Magnoliopsida</taxon>
        <taxon>Nymphaeales</taxon>
        <taxon>Nymphaeaceae</taxon>
        <taxon>Nuphar</taxon>
    </lineage>
</organism>
<gene>
    <name evidence="1" type="primary">matK</name>
</gene>
<evidence type="ECO:0000255" key="1">
    <source>
        <dbReference type="HAMAP-Rule" id="MF_01390"/>
    </source>
</evidence>
<dbReference type="EMBL" id="AF092979">
    <property type="protein sequence ID" value="AAD05554.1"/>
    <property type="molecule type" value="Genomic_DNA"/>
</dbReference>
<dbReference type="GO" id="GO:0009507">
    <property type="term" value="C:chloroplast"/>
    <property type="evidence" value="ECO:0007669"/>
    <property type="project" value="UniProtKB-SubCell"/>
</dbReference>
<dbReference type="GO" id="GO:0003723">
    <property type="term" value="F:RNA binding"/>
    <property type="evidence" value="ECO:0007669"/>
    <property type="project" value="UniProtKB-KW"/>
</dbReference>
<dbReference type="GO" id="GO:0006397">
    <property type="term" value="P:mRNA processing"/>
    <property type="evidence" value="ECO:0007669"/>
    <property type="project" value="UniProtKB-KW"/>
</dbReference>
<dbReference type="GO" id="GO:0008380">
    <property type="term" value="P:RNA splicing"/>
    <property type="evidence" value="ECO:0007669"/>
    <property type="project" value="UniProtKB-UniRule"/>
</dbReference>
<dbReference type="GO" id="GO:0008033">
    <property type="term" value="P:tRNA processing"/>
    <property type="evidence" value="ECO:0007669"/>
    <property type="project" value="UniProtKB-KW"/>
</dbReference>
<dbReference type="HAMAP" id="MF_01390">
    <property type="entry name" value="MatK"/>
    <property type="match status" value="1"/>
</dbReference>
<dbReference type="InterPro" id="IPR024937">
    <property type="entry name" value="Domain_X"/>
</dbReference>
<dbReference type="InterPro" id="IPR002866">
    <property type="entry name" value="Maturase_MatK"/>
</dbReference>
<dbReference type="InterPro" id="IPR024942">
    <property type="entry name" value="Maturase_MatK_N"/>
</dbReference>
<dbReference type="PANTHER" id="PTHR34811">
    <property type="entry name" value="MATURASE K"/>
    <property type="match status" value="1"/>
</dbReference>
<dbReference type="PANTHER" id="PTHR34811:SF1">
    <property type="entry name" value="MATURASE K"/>
    <property type="match status" value="1"/>
</dbReference>
<dbReference type="Pfam" id="PF01348">
    <property type="entry name" value="Intron_maturas2"/>
    <property type="match status" value="1"/>
</dbReference>
<dbReference type="Pfam" id="PF01824">
    <property type="entry name" value="MatK_N"/>
    <property type="match status" value="1"/>
</dbReference>
<keyword id="KW-0150">Chloroplast</keyword>
<keyword id="KW-0507">mRNA processing</keyword>
<keyword id="KW-0934">Plastid</keyword>
<keyword id="KW-0694">RNA-binding</keyword>
<keyword id="KW-0819">tRNA processing</keyword>
<name>MATK_NUPVA</name>
<feature type="chain" id="PRO_0000143550" description="Maturase K">
    <location>
        <begin position="1"/>
        <end position="505"/>
    </location>
</feature>
<protein>
    <recommendedName>
        <fullName evidence="1">Maturase K</fullName>
    </recommendedName>
    <alternativeName>
        <fullName evidence="1">Intron maturase</fullName>
    </alternativeName>
</protein>